<proteinExistence type="inferred from homology"/>
<dbReference type="EC" id="3.6.5.-" evidence="1"/>
<dbReference type="EMBL" id="CP000408">
    <property type="protein sequence ID" value="ABP91911.1"/>
    <property type="molecule type" value="Genomic_DNA"/>
</dbReference>
<dbReference type="SMR" id="A4W0M2"/>
<dbReference type="KEGG" id="ssv:SSU98_0753"/>
<dbReference type="HOGENOM" id="CLU_011747_2_1_9"/>
<dbReference type="GO" id="GO:0005737">
    <property type="term" value="C:cytoplasm"/>
    <property type="evidence" value="ECO:0007669"/>
    <property type="project" value="UniProtKB-SubCell"/>
</dbReference>
<dbReference type="GO" id="GO:0005525">
    <property type="term" value="F:GTP binding"/>
    <property type="evidence" value="ECO:0007669"/>
    <property type="project" value="UniProtKB-UniRule"/>
</dbReference>
<dbReference type="GO" id="GO:0003924">
    <property type="term" value="F:GTPase activity"/>
    <property type="evidence" value="ECO:0007669"/>
    <property type="project" value="UniProtKB-UniRule"/>
</dbReference>
<dbReference type="GO" id="GO:0000287">
    <property type="term" value="F:magnesium ion binding"/>
    <property type="evidence" value="ECO:0007669"/>
    <property type="project" value="InterPro"/>
</dbReference>
<dbReference type="GO" id="GO:0042254">
    <property type="term" value="P:ribosome biogenesis"/>
    <property type="evidence" value="ECO:0007669"/>
    <property type="project" value="UniProtKB-UniRule"/>
</dbReference>
<dbReference type="CDD" id="cd01898">
    <property type="entry name" value="Obg"/>
    <property type="match status" value="1"/>
</dbReference>
<dbReference type="FunFam" id="2.70.210.12:FF:000001">
    <property type="entry name" value="GTPase Obg"/>
    <property type="match status" value="1"/>
</dbReference>
<dbReference type="FunFam" id="3.40.50.300:FF:000515">
    <property type="entry name" value="GTPase Obg"/>
    <property type="match status" value="1"/>
</dbReference>
<dbReference type="Gene3D" id="3.30.300.350">
    <property type="entry name" value="GTP-binding protein OBG, C-terminal domain"/>
    <property type="match status" value="1"/>
</dbReference>
<dbReference type="Gene3D" id="2.70.210.12">
    <property type="entry name" value="GTP1/OBG domain"/>
    <property type="match status" value="1"/>
</dbReference>
<dbReference type="Gene3D" id="3.40.50.300">
    <property type="entry name" value="P-loop containing nucleotide triphosphate hydrolases"/>
    <property type="match status" value="1"/>
</dbReference>
<dbReference type="HAMAP" id="MF_01454">
    <property type="entry name" value="GTPase_Obg"/>
    <property type="match status" value="1"/>
</dbReference>
<dbReference type="InterPro" id="IPR031167">
    <property type="entry name" value="G_OBG"/>
</dbReference>
<dbReference type="InterPro" id="IPR006073">
    <property type="entry name" value="GTP-bd"/>
</dbReference>
<dbReference type="InterPro" id="IPR014100">
    <property type="entry name" value="GTP-bd_Obg/CgtA"/>
</dbReference>
<dbReference type="InterPro" id="IPR036346">
    <property type="entry name" value="GTP-bd_prot_GTP1/OBG_C_sf"/>
</dbReference>
<dbReference type="InterPro" id="IPR006074">
    <property type="entry name" value="GTP1-OBG_CS"/>
</dbReference>
<dbReference type="InterPro" id="IPR006169">
    <property type="entry name" value="GTP1_OBG_dom"/>
</dbReference>
<dbReference type="InterPro" id="IPR036726">
    <property type="entry name" value="GTP1_OBG_dom_sf"/>
</dbReference>
<dbReference type="InterPro" id="IPR045086">
    <property type="entry name" value="OBG_GTPase"/>
</dbReference>
<dbReference type="InterPro" id="IPR015349">
    <property type="entry name" value="OCT_dom"/>
</dbReference>
<dbReference type="InterPro" id="IPR027417">
    <property type="entry name" value="P-loop_NTPase"/>
</dbReference>
<dbReference type="InterPro" id="IPR005225">
    <property type="entry name" value="Small_GTP-bd"/>
</dbReference>
<dbReference type="NCBIfam" id="TIGR02729">
    <property type="entry name" value="Obg_CgtA"/>
    <property type="match status" value="1"/>
</dbReference>
<dbReference type="NCBIfam" id="TIGR03595">
    <property type="entry name" value="Obg_CgtA_exten"/>
    <property type="match status" value="1"/>
</dbReference>
<dbReference type="NCBIfam" id="NF008954">
    <property type="entry name" value="PRK12296.1"/>
    <property type="match status" value="1"/>
</dbReference>
<dbReference type="NCBIfam" id="NF008955">
    <property type="entry name" value="PRK12297.1"/>
    <property type="match status" value="1"/>
</dbReference>
<dbReference type="NCBIfam" id="NF008956">
    <property type="entry name" value="PRK12299.1"/>
    <property type="match status" value="1"/>
</dbReference>
<dbReference type="NCBIfam" id="TIGR00231">
    <property type="entry name" value="small_GTP"/>
    <property type="match status" value="1"/>
</dbReference>
<dbReference type="PANTHER" id="PTHR11702">
    <property type="entry name" value="DEVELOPMENTALLY REGULATED GTP-BINDING PROTEIN-RELATED"/>
    <property type="match status" value="1"/>
</dbReference>
<dbReference type="PANTHER" id="PTHR11702:SF31">
    <property type="entry name" value="MITOCHONDRIAL RIBOSOME-ASSOCIATED GTPASE 2"/>
    <property type="match status" value="1"/>
</dbReference>
<dbReference type="Pfam" id="PF09269">
    <property type="entry name" value="DUF1967"/>
    <property type="match status" value="1"/>
</dbReference>
<dbReference type="Pfam" id="PF01018">
    <property type="entry name" value="GTP1_OBG"/>
    <property type="match status" value="1"/>
</dbReference>
<dbReference type="Pfam" id="PF01926">
    <property type="entry name" value="MMR_HSR1"/>
    <property type="match status" value="1"/>
</dbReference>
<dbReference type="PRINTS" id="PR00326">
    <property type="entry name" value="GTP1OBG"/>
</dbReference>
<dbReference type="SUPFAM" id="SSF102741">
    <property type="entry name" value="Obg GTP-binding protein C-terminal domain"/>
    <property type="match status" value="1"/>
</dbReference>
<dbReference type="SUPFAM" id="SSF82051">
    <property type="entry name" value="Obg GTP-binding protein N-terminal domain"/>
    <property type="match status" value="1"/>
</dbReference>
<dbReference type="SUPFAM" id="SSF52540">
    <property type="entry name" value="P-loop containing nucleoside triphosphate hydrolases"/>
    <property type="match status" value="1"/>
</dbReference>
<dbReference type="PROSITE" id="PS51710">
    <property type="entry name" value="G_OBG"/>
    <property type="match status" value="1"/>
</dbReference>
<dbReference type="PROSITE" id="PS00905">
    <property type="entry name" value="GTP1_OBG"/>
    <property type="match status" value="1"/>
</dbReference>
<dbReference type="PROSITE" id="PS51883">
    <property type="entry name" value="OBG"/>
    <property type="match status" value="1"/>
</dbReference>
<dbReference type="PROSITE" id="PS51881">
    <property type="entry name" value="OCT"/>
    <property type="match status" value="1"/>
</dbReference>
<keyword id="KW-0963">Cytoplasm</keyword>
<keyword id="KW-0342">GTP-binding</keyword>
<keyword id="KW-0378">Hydrolase</keyword>
<keyword id="KW-0460">Magnesium</keyword>
<keyword id="KW-0479">Metal-binding</keyword>
<keyword id="KW-0547">Nucleotide-binding</keyword>
<comment type="function">
    <text evidence="1">An essential GTPase which binds GTP, GDP and possibly (p)ppGpp with moderate affinity, with high nucleotide exchange rates and a fairly low GTP hydrolysis rate. Plays a role in control of the cell cycle, stress response, ribosome biogenesis and in those bacteria that undergo differentiation, in morphogenesis control.</text>
</comment>
<comment type="cofactor">
    <cofactor evidence="1">
        <name>Mg(2+)</name>
        <dbReference type="ChEBI" id="CHEBI:18420"/>
    </cofactor>
</comment>
<comment type="subunit">
    <text evidence="1">Monomer.</text>
</comment>
<comment type="subcellular location">
    <subcellularLocation>
        <location evidence="1">Cytoplasm</location>
    </subcellularLocation>
</comment>
<comment type="similarity">
    <text evidence="1">Belongs to the TRAFAC class OBG-HflX-like GTPase superfamily. OBG GTPase family.</text>
</comment>
<evidence type="ECO:0000255" key="1">
    <source>
        <dbReference type="HAMAP-Rule" id="MF_01454"/>
    </source>
</evidence>
<evidence type="ECO:0000255" key="2">
    <source>
        <dbReference type="PROSITE-ProRule" id="PRU01229"/>
    </source>
</evidence>
<evidence type="ECO:0000255" key="3">
    <source>
        <dbReference type="PROSITE-ProRule" id="PRU01231"/>
    </source>
</evidence>
<feature type="chain" id="PRO_0000386317" description="GTPase Obg">
    <location>
        <begin position="1"/>
        <end position="437"/>
    </location>
</feature>
<feature type="domain" description="Obg" evidence="3">
    <location>
        <begin position="2"/>
        <end position="160"/>
    </location>
</feature>
<feature type="domain" description="OBG-type G" evidence="1">
    <location>
        <begin position="161"/>
        <end position="338"/>
    </location>
</feature>
<feature type="domain" description="OCT" evidence="2">
    <location>
        <begin position="359"/>
        <end position="437"/>
    </location>
</feature>
<feature type="binding site" evidence="1">
    <location>
        <begin position="167"/>
        <end position="174"/>
    </location>
    <ligand>
        <name>GTP</name>
        <dbReference type="ChEBI" id="CHEBI:37565"/>
    </ligand>
</feature>
<feature type="binding site" evidence="1">
    <location>
        <position position="174"/>
    </location>
    <ligand>
        <name>Mg(2+)</name>
        <dbReference type="ChEBI" id="CHEBI:18420"/>
    </ligand>
</feature>
<feature type="binding site" evidence="1">
    <location>
        <begin position="192"/>
        <end position="196"/>
    </location>
    <ligand>
        <name>GTP</name>
        <dbReference type="ChEBI" id="CHEBI:37565"/>
    </ligand>
</feature>
<feature type="binding site" evidence="1">
    <location>
        <position position="194"/>
    </location>
    <ligand>
        <name>Mg(2+)</name>
        <dbReference type="ChEBI" id="CHEBI:18420"/>
    </ligand>
</feature>
<feature type="binding site" evidence="1">
    <location>
        <begin position="214"/>
        <end position="217"/>
    </location>
    <ligand>
        <name>GTP</name>
        <dbReference type="ChEBI" id="CHEBI:37565"/>
    </ligand>
</feature>
<feature type="binding site" evidence="1">
    <location>
        <begin position="284"/>
        <end position="287"/>
    </location>
    <ligand>
        <name>GTP</name>
        <dbReference type="ChEBI" id="CHEBI:37565"/>
    </ligand>
</feature>
<feature type="binding site" evidence="1">
    <location>
        <begin position="319"/>
        <end position="321"/>
    </location>
    <ligand>
        <name>GTP</name>
        <dbReference type="ChEBI" id="CHEBI:37565"/>
    </ligand>
</feature>
<protein>
    <recommendedName>
        <fullName evidence="1">GTPase Obg</fullName>
        <ecNumber evidence="1">3.6.5.-</ecNumber>
    </recommendedName>
    <alternativeName>
        <fullName evidence="1">GTP-binding protein Obg</fullName>
    </alternativeName>
</protein>
<gene>
    <name evidence="1" type="primary">obg</name>
    <name type="ordered locus">SSU98_0753</name>
</gene>
<organism>
    <name type="scientific">Streptococcus suis (strain 98HAH33)</name>
    <dbReference type="NCBI Taxonomy" id="391296"/>
    <lineage>
        <taxon>Bacteria</taxon>
        <taxon>Bacillati</taxon>
        <taxon>Bacillota</taxon>
        <taxon>Bacilli</taxon>
        <taxon>Lactobacillales</taxon>
        <taxon>Streptococcaceae</taxon>
        <taxon>Streptococcus</taxon>
    </lineage>
</organism>
<reference key="1">
    <citation type="journal article" date="2007" name="PLoS ONE">
        <title>A glimpse of streptococcal toxic shock syndrome from comparative genomics of S. suis 2 Chinese isolates.</title>
        <authorList>
            <person name="Chen C."/>
            <person name="Tang J."/>
            <person name="Dong W."/>
            <person name="Wang C."/>
            <person name="Feng Y."/>
            <person name="Wang J."/>
            <person name="Zheng F."/>
            <person name="Pan X."/>
            <person name="Liu D."/>
            <person name="Li M."/>
            <person name="Song Y."/>
            <person name="Zhu X."/>
            <person name="Sun H."/>
            <person name="Feng T."/>
            <person name="Guo Z."/>
            <person name="Ju A."/>
            <person name="Ge J."/>
            <person name="Dong Y."/>
            <person name="Sun W."/>
            <person name="Jiang Y."/>
            <person name="Wang J."/>
            <person name="Yan J."/>
            <person name="Yang H."/>
            <person name="Wang X."/>
            <person name="Gao G.F."/>
            <person name="Yang R."/>
            <person name="Wang J."/>
            <person name="Yu J."/>
        </authorList>
    </citation>
    <scope>NUCLEOTIDE SEQUENCE [LARGE SCALE GENOMIC DNA]</scope>
    <source>
        <strain>98HAH33</strain>
    </source>
</reference>
<accession>A4W0M2</accession>
<sequence length="437" mass="48362">MSMFLDTAKIKVKAGKGGDGMVAFRREKYVPNGGPWGGDGGHGGNVVFVVDEGLRTLMDFRYNRRFKADDGEKGMTKGMHGRGAEDLIVRVPQGTTVRDADTGKIITDLVENGQEFVIAHGGRGGRGNIRFATPKNPAPEISENGEPGEERNLELELKVLADVGLVGFPSVGKSTLLSVITAAKPKIGAYHFTTIVPNLGMVRTKSGESFAVADLPGLIEGASQGVGLGTQFLRHIERTRVILHVLDMSASEGRDPYEDYVAINNELETYNLRLMERPQIIVANKMDMPEAEEHLEEFKKKLATNYDEFEELPQIFPISGIAHQGLENLLEATAELLEKTPEFLLYDESDFQEEEAYYGFNPDEPEFAISRADDASWILSGDKLEKLFTMTNFDRDESVMKFARQLRGMGVDEALRARGAKDGDIVRIGKFEFEFVD</sequence>
<name>OBG_STRS2</name>